<organism>
    <name type="scientific">Saccharomyces cerevisiae (strain AWRI1631)</name>
    <name type="common">Baker's yeast</name>
    <dbReference type="NCBI Taxonomy" id="545124"/>
    <lineage>
        <taxon>Eukaryota</taxon>
        <taxon>Fungi</taxon>
        <taxon>Dikarya</taxon>
        <taxon>Ascomycota</taxon>
        <taxon>Saccharomycotina</taxon>
        <taxon>Saccharomycetes</taxon>
        <taxon>Saccharomycetales</taxon>
        <taxon>Saccharomycetaceae</taxon>
        <taxon>Saccharomyces</taxon>
    </lineage>
</organism>
<reference key="1">
    <citation type="journal article" date="2008" name="FEMS Yeast Res.">
        <title>Comparative genome analysis of a Saccharomyces cerevisiae wine strain.</title>
        <authorList>
            <person name="Borneman A.R."/>
            <person name="Forgan A.H."/>
            <person name="Pretorius I.S."/>
            <person name="Chambers P.J."/>
        </authorList>
    </citation>
    <scope>NUCLEOTIDE SEQUENCE [LARGE SCALE GENOMIC DNA]</scope>
    <source>
        <strain>AWRI1631</strain>
    </source>
</reference>
<dbReference type="EC" id="5.3.1.23" evidence="2"/>
<dbReference type="EMBL" id="ABSV01002423">
    <property type="protein sequence ID" value="EDZ68699.1"/>
    <property type="molecule type" value="Genomic_DNA"/>
</dbReference>
<dbReference type="SMR" id="B5VTQ8"/>
<dbReference type="UniPathway" id="UPA00904">
    <property type="reaction ID" value="UER00874"/>
</dbReference>
<dbReference type="Proteomes" id="UP000008988">
    <property type="component" value="Unassembled WGS sequence"/>
</dbReference>
<dbReference type="GO" id="GO:0005737">
    <property type="term" value="C:cytoplasm"/>
    <property type="evidence" value="ECO:0007669"/>
    <property type="project" value="UniProtKB-SubCell"/>
</dbReference>
<dbReference type="GO" id="GO:0005634">
    <property type="term" value="C:nucleus"/>
    <property type="evidence" value="ECO:0007669"/>
    <property type="project" value="UniProtKB-SubCell"/>
</dbReference>
<dbReference type="GO" id="GO:0046523">
    <property type="term" value="F:S-methyl-5-thioribose-1-phosphate isomerase activity"/>
    <property type="evidence" value="ECO:0007669"/>
    <property type="project" value="UniProtKB-UniRule"/>
</dbReference>
<dbReference type="GO" id="GO:0019509">
    <property type="term" value="P:L-methionine salvage from methylthioadenosine"/>
    <property type="evidence" value="ECO:0007669"/>
    <property type="project" value="UniProtKB-UniRule"/>
</dbReference>
<dbReference type="FunFam" id="1.20.120.420:FF:000006">
    <property type="entry name" value="Methylthioribose-1-phosphate isomerase"/>
    <property type="match status" value="1"/>
</dbReference>
<dbReference type="FunFam" id="3.40.50.10470:FF:000026">
    <property type="entry name" value="Methylthioribose-1-phosphate isomerase"/>
    <property type="match status" value="1"/>
</dbReference>
<dbReference type="Gene3D" id="1.20.120.420">
    <property type="entry name" value="translation initiation factor eif-2b, domain 1"/>
    <property type="match status" value="1"/>
</dbReference>
<dbReference type="Gene3D" id="3.40.50.10470">
    <property type="entry name" value="Translation initiation factor eif-2b, domain 2"/>
    <property type="match status" value="1"/>
</dbReference>
<dbReference type="HAMAP" id="MF_01678">
    <property type="entry name" value="Salvage_MtnA"/>
    <property type="match status" value="1"/>
</dbReference>
<dbReference type="InterPro" id="IPR000649">
    <property type="entry name" value="IF-2B-related"/>
</dbReference>
<dbReference type="InterPro" id="IPR005251">
    <property type="entry name" value="IF-M1Pi"/>
</dbReference>
<dbReference type="InterPro" id="IPR042529">
    <property type="entry name" value="IF_2B-like_C"/>
</dbReference>
<dbReference type="InterPro" id="IPR011559">
    <property type="entry name" value="Initiation_fac_2B_a/b/d"/>
</dbReference>
<dbReference type="InterPro" id="IPR027363">
    <property type="entry name" value="M1Pi_N"/>
</dbReference>
<dbReference type="InterPro" id="IPR037171">
    <property type="entry name" value="NagB/RpiA_transferase-like"/>
</dbReference>
<dbReference type="NCBIfam" id="TIGR00524">
    <property type="entry name" value="eIF-2B_rel"/>
    <property type="match status" value="1"/>
</dbReference>
<dbReference type="NCBIfam" id="NF004326">
    <property type="entry name" value="PRK05720.1"/>
    <property type="match status" value="1"/>
</dbReference>
<dbReference type="NCBIfam" id="TIGR00512">
    <property type="entry name" value="salvage_mtnA"/>
    <property type="match status" value="1"/>
</dbReference>
<dbReference type="PANTHER" id="PTHR43475">
    <property type="entry name" value="METHYLTHIORIBOSE-1-PHOSPHATE ISOMERASE"/>
    <property type="match status" value="1"/>
</dbReference>
<dbReference type="PANTHER" id="PTHR43475:SF1">
    <property type="entry name" value="METHYLTHIORIBOSE-1-PHOSPHATE ISOMERASE"/>
    <property type="match status" value="1"/>
</dbReference>
<dbReference type="Pfam" id="PF01008">
    <property type="entry name" value="IF-2B"/>
    <property type="match status" value="1"/>
</dbReference>
<dbReference type="SUPFAM" id="SSF100950">
    <property type="entry name" value="NagB/RpiA/CoA transferase-like"/>
    <property type="match status" value="1"/>
</dbReference>
<comment type="function">
    <text evidence="2">Catalyzes the interconversion of methylthioribose-1-phosphate (MTR-1-P) into methylthioribulose-1-phosphate (MTRu-1-P).</text>
</comment>
<comment type="catalytic activity">
    <reaction evidence="2">
        <text>5-(methylsulfanyl)-alpha-D-ribose 1-phosphate = 5-(methylsulfanyl)-D-ribulose 1-phosphate</text>
        <dbReference type="Rhea" id="RHEA:19989"/>
        <dbReference type="ChEBI" id="CHEBI:58533"/>
        <dbReference type="ChEBI" id="CHEBI:58548"/>
        <dbReference type="EC" id="5.3.1.23"/>
    </reaction>
</comment>
<comment type="pathway">
    <text evidence="2">Amino-acid biosynthesis; L-methionine biosynthesis via salvage pathway; L-methionine from S-methyl-5-thio-alpha-D-ribose 1-phosphate: step 1/6.</text>
</comment>
<comment type="subunit">
    <text>Homodimer.</text>
</comment>
<comment type="subcellular location">
    <subcellularLocation>
        <location evidence="2">Cytoplasm</location>
    </subcellularLocation>
    <subcellularLocation>
        <location evidence="2">Nucleus</location>
    </subcellularLocation>
</comment>
<comment type="similarity">
    <text evidence="2">Belongs to the eIF-2B alpha/beta/delta subunits family. MtnA subfamily.</text>
</comment>
<gene>
    <name evidence="2" type="primary">MRI1</name>
    <name type="ORF">AWRI1631_163720</name>
</gene>
<sequence>MSLEAIVFDRSEPENVSVKVLDQLLLPYTTKYVPIHTIDDGYSVIKSMQVRGAPAIAIVGSLSVLTEVQLIKHNPTSDVATLYSLVNWESTKTVLNKRLDFLLSSRPTAVNLSNSLVEIKNILKSSSDLKAFDGSLYNYVCELIDEDLANNMKMGDNGAKYLIDVLQKDGFKDEFAVLTICNTGSLATSGYGTALGVIRSLWKDSLAKTDKADSGLDNEKCPRMGHVFPLETRPYNQGSRLTAYELVYDKIPSTLITDSSIAYRIRTSPIPIKAAFVGADRIVRNGDTANKIGTLQLAVICKQFGIKFFVVAPKTTIDNVTETGDDIIVEERNPEEFKVVTGTVINPENGSLILNESGEPITGKVGIAPLEINVWNPAFDITPHELIDGIITEEGVFTKNSSGEFQLESLF</sequence>
<feature type="initiator methionine" description="Removed" evidence="1">
    <location>
        <position position="1"/>
    </location>
</feature>
<feature type="chain" id="PRO_0000402047" description="Methylthioribose-1-phosphate isomerase">
    <location>
        <begin position="2"/>
        <end position="411"/>
    </location>
</feature>
<feature type="active site" description="Proton donor" evidence="2">
    <location>
        <position position="280"/>
    </location>
</feature>
<feature type="site" description="Transition state stabilizer" evidence="2">
    <location>
        <position position="181"/>
    </location>
</feature>
<feature type="modified residue" description="N-acetylserine" evidence="1">
    <location>
        <position position="2"/>
    </location>
</feature>
<feature type="modified residue" description="Phosphoserine" evidence="1">
    <location>
        <position position="351"/>
    </location>
</feature>
<keyword id="KW-0007">Acetylation</keyword>
<keyword id="KW-0028">Amino-acid biosynthesis</keyword>
<keyword id="KW-0963">Cytoplasm</keyword>
<keyword id="KW-0413">Isomerase</keyword>
<keyword id="KW-0486">Methionine biosynthesis</keyword>
<keyword id="KW-0539">Nucleus</keyword>
<keyword id="KW-0597">Phosphoprotein</keyword>
<accession>B5VTQ8</accession>
<protein>
    <recommendedName>
        <fullName evidence="2">Methylthioribose-1-phosphate isomerase</fullName>
        <shortName evidence="2">M1Pi</shortName>
        <shortName evidence="2">MTR-1-P isomerase</shortName>
        <ecNumber evidence="2">5.3.1.23</ecNumber>
    </recommendedName>
    <alternativeName>
        <fullName evidence="2">S-methyl-5-thioribose-1-phosphate isomerase</fullName>
    </alternativeName>
    <alternativeName>
        <fullName evidence="2">Translation initiation factor eIF-2B subunit alpha/beta/delta-like protein</fullName>
    </alternativeName>
</protein>
<name>MTNA_YEAS6</name>
<evidence type="ECO:0000250" key="1">
    <source>
        <dbReference type="UniProtKB" id="Q06489"/>
    </source>
</evidence>
<evidence type="ECO:0000255" key="2">
    <source>
        <dbReference type="HAMAP-Rule" id="MF_03119"/>
    </source>
</evidence>
<proteinExistence type="inferred from homology"/>